<accession>Q3YWV0</accession>
<comment type="function">
    <text evidence="1">One of two assembly initiator proteins, it binds directly to the 5'-end of the 23S rRNA, where it nucleates assembly of the 50S subunit.</text>
</comment>
<comment type="function">
    <text evidence="1">One of the proteins that surrounds the polypeptide exit tunnel on the outside of the subunit.</text>
</comment>
<comment type="subunit">
    <text evidence="1">Part of the 50S ribosomal subunit.</text>
</comment>
<comment type="similarity">
    <text evidence="1">Belongs to the universal ribosomal protein uL24 family.</text>
</comment>
<dbReference type="EMBL" id="CP000038">
    <property type="protein sequence ID" value="AAZ90012.1"/>
    <property type="molecule type" value="Genomic_DNA"/>
</dbReference>
<dbReference type="RefSeq" id="WP_000729185.1">
    <property type="nucleotide sequence ID" value="NC_007384.1"/>
</dbReference>
<dbReference type="SMR" id="Q3YWV0"/>
<dbReference type="GeneID" id="93778678"/>
<dbReference type="KEGG" id="ssn:SSON_3450"/>
<dbReference type="HOGENOM" id="CLU_093315_2_2_6"/>
<dbReference type="Proteomes" id="UP000002529">
    <property type="component" value="Chromosome"/>
</dbReference>
<dbReference type="GO" id="GO:0005829">
    <property type="term" value="C:cytosol"/>
    <property type="evidence" value="ECO:0007669"/>
    <property type="project" value="UniProtKB-ARBA"/>
</dbReference>
<dbReference type="GO" id="GO:1990904">
    <property type="term" value="C:ribonucleoprotein complex"/>
    <property type="evidence" value="ECO:0007669"/>
    <property type="project" value="UniProtKB-KW"/>
</dbReference>
<dbReference type="GO" id="GO:0005840">
    <property type="term" value="C:ribosome"/>
    <property type="evidence" value="ECO:0007669"/>
    <property type="project" value="UniProtKB-KW"/>
</dbReference>
<dbReference type="GO" id="GO:0019843">
    <property type="term" value="F:rRNA binding"/>
    <property type="evidence" value="ECO:0007669"/>
    <property type="project" value="UniProtKB-UniRule"/>
</dbReference>
<dbReference type="GO" id="GO:0003735">
    <property type="term" value="F:structural constituent of ribosome"/>
    <property type="evidence" value="ECO:0007669"/>
    <property type="project" value="InterPro"/>
</dbReference>
<dbReference type="GO" id="GO:0006412">
    <property type="term" value="P:translation"/>
    <property type="evidence" value="ECO:0007669"/>
    <property type="project" value="UniProtKB-UniRule"/>
</dbReference>
<dbReference type="CDD" id="cd06089">
    <property type="entry name" value="KOW_RPL26"/>
    <property type="match status" value="1"/>
</dbReference>
<dbReference type="FunFam" id="2.30.30.30:FF:000004">
    <property type="entry name" value="50S ribosomal protein L24"/>
    <property type="match status" value="1"/>
</dbReference>
<dbReference type="Gene3D" id="2.30.30.30">
    <property type="match status" value="1"/>
</dbReference>
<dbReference type="HAMAP" id="MF_01326_B">
    <property type="entry name" value="Ribosomal_uL24_B"/>
    <property type="match status" value="1"/>
</dbReference>
<dbReference type="InterPro" id="IPR005824">
    <property type="entry name" value="KOW"/>
</dbReference>
<dbReference type="InterPro" id="IPR014722">
    <property type="entry name" value="Rib_uL2_dom2"/>
</dbReference>
<dbReference type="InterPro" id="IPR003256">
    <property type="entry name" value="Ribosomal_uL24"/>
</dbReference>
<dbReference type="InterPro" id="IPR005825">
    <property type="entry name" value="Ribosomal_uL24_CS"/>
</dbReference>
<dbReference type="InterPro" id="IPR041988">
    <property type="entry name" value="Ribosomal_uL24_KOW"/>
</dbReference>
<dbReference type="InterPro" id="IPR008991">
    <property type="entry name" value="Translation_prot_SH3-like_sf"/>
</dbReference>
<dbReference type="NCBIfam" id="TIGR01079">
    <property type="entry name" value="rplX_bact"/>
    <property type="match status" value="1"/>
</dbReference>
<dbReference type="PANTHER" id="PTHR12903">
    <property type="entry name" value="MITOCHONDRIAL RIBOSOMAL PROTEIN L24"/>
    <property type="match status" value="1"/>
</dbReference>
<dbReference type="Pfam" id="PF00467">
    <property type="entry name" value="KOW"/>
    <property type="match status" value="1"/>
</dbReference>
<dbReference type="Pfam" id="PF17136">
    <property type="entry name" value="ribosomal_L24"/>
    <property type="match status" value="1"/>
</dbReference>
<dbReference type="SMART" id="SM00739">
    <property type="entry name" value="KOW"/>
    <property type="match status" value="1"/>
</dbReference>
<dbReference type="SUPFAM" id="SSF50104">
    <property type="entry name" value="Translation proteins SH3-like domain"/>
    <property type="match status" value="1"/>
</dbReference>
<dbReference type="PROSITE" id="PS01108">
    <property type="entry name" value="RIBOSOMAL_L24"/>
    <property type="match status" value="1"/>
</dbReference>
<name>RL24_SHISS</name>
<evidence type="ECO:0000255" key="1">
    <source>
        <dbReference type="HAMAP-Rule" id="MF_01326"/>
    </source>
</evidence>
<evidence type="ECO:0000305" key="2"/>
<organism>
    <name type="scientific">Shigella sonnei (strain Ss046)</name>
    <dbReference type="NCBI Taxonomy" id="300269"/>
    <lineage>
        <taxon>Bacteria</taxon>
        <taxon>Pseudomonadati</taxon>
        <taxon>Pseudomonadota</taxon>
        <taxon>Gammaproteobacteria</taxon>
        <taxon>Enterobacterales</taxon>
        <taxon>Enterobacteriaceae</taxon>
        <taxon>Shigella</taxon>
    </lineage>
</organism>
<reference key="1">
    <citation type="journal article" date="2005" name="Nucleic Acids Res.">
        <title>Genome dynamics and diversity of Shigella species, the etiologic agents of bacillary dysentery.</title>
        <authorList>
            <person name="Yang F."/>
            <person name="Yang J."/>
            <person name="Zhang X."/>
            <person name="Chen L."/>
            <person name="Jiang Y."/>
            <person name="Yan Y."/>
            <person name="Tang X."/>
            <person name="Wang J."/>
            <person name="Xiong Z."/>
            <person name="Dong J."/>
            <person name="Xue Y."/>
            <person name="Zhu Y."/>
            <person name="Xu X."/>
            <person name="Sun L."/>
            <person name="Chen S."/>
            <person name="Nie H."/>
            <person name="Peng J."/>
            <person name="Xu J."/>
            <person name="Wang Y."/>
            <person name="Yuan Z."/>
            <person name="Wen Y."/>
            <person name="Yao Z."/>
            <person name="Shen Y."/>
            <person name="Qiang B."/>
            <person name="Hou Y."/>
            <person name="Yu J."/>
            <person name="Jin Q."/>
        </authorList>
    </citation>
    <scope>NUCLEOTIDE SEQUENCE [LARGE SCALE GENOMIC DNA]</scope>
    <source>
        <strain>Ss046</strain>
    </source>
</reference>
<keyword id="KW-1185">Reference proteome</keyword>
<keyword id="KW-0687">Ribonucleoprotein</keyword>
<keyword id="KW-0689">Ribosomal protein</keyword>
<keyword id="KW-0694">RNA-binding</keyword>
<keyword id="KW-0699">rRNA-binding</keyword>
<feature type="chain" id="PRO_0000241662" description="Large ribosomal subunit protein uL24">
    <location>
        <begin position="1"/>
        <end position="104"/>
    </location>
</feature>
<sequence>MAAKIRRDDEVIVLTGKDKGKRGKVKNVLSSGKVIVEGINLVKKHQKPVPALNQPGGIVEKEAAIQVSNVAIFNAATGKADRVGFRFEDGKKVRFFKSNSETIK</sequence>
<protein>
    <recommendedName>
        <fullName evidence="1">Large ribosomal subunit protein uL24</fullName>
    </recommendedName>
    <alternativeName>
        <fullName evidence="2">50S ribosomal protein L24</fullName>
    </alternativeName>
</protein>
<proteinExistence type="inferred from homology"/>
<gene>
    <name evidence="1" type="primary">rplX</name>
    <name type="ordered locus">SSON_3450</name>
</gene>